<comment type="similarity">
    <text evidence="1">Belongs to the universal ribosomal protein uL29 family.</text>
</comment>
<reference key="1">
    <citation type="journal article" date="2002" name="Proc. Natl. Acad. Sci. U.S.A.">
        <title>The genome sequence of the facultative intracellular pathogen Brucella melitensis.</title>
        <authorList>
            <person name="DelVecchio V.G."/>
            <person name="Kapatral V."/>
            <person name="Redkar R.J."/>
            <person name="Patra G."/>
            <person name="Mujer C."/>
            <person name="Los T."/>
            <person name="Ivanova N."/>
            <person name="Anderson I."/>
            <person name="Bhattacharyya A."/>
            <person name="Lykidis A."/>
            <person name="Reznik G."/>
            <person name="Jablonski L."/>
            <person name="Larsen N."/>
            <person name="D'Souza M."/>
            <person name="Bernal A."/>
            <person name="Mazur M."/>
            <person name="Goltsman E."/>
            <person name="Selkov E."/>
            <person name="Elzer P.H."/>
            <person name="Hagius S."/>
            <person name="O'Callaghan D."/>
            <person name="Letesson J.-J."/>
            <person name="Haselkorn R."/>
            <person name="Kyrpides N.C."/>
            <person name="Overbeek R."/>
        </authorList>
    </citation>
    <scope>NUCLEOTIDE SEQUENCE [LARGE SCALE GENOMIC DNA]</scope>
    <source>
        <strain>ATCC 23456 / CCUG 17765 / NCTC 10094 / 16M</strain>
    </source>
</reference>
<accession>P66164</accession>
<accession>Q8YHN2</accession>
<name>RL29_BRUME</name>
<proteinExistence type="inferred from homology"/>
<dbReference type="EMBL" id="AE008917">
    <property type="protein sequence ID" value="AAL51946.1"/>
    <property type="molecule type" value="Genomic_DNA"/>
</dbReference>
<dbReference type="PIR" id="AG3347">
    <property type="entry name" value="AG3347"/>
</dbReference>
<dbReference type="RefSeq" id="WP_002964354.1">
    <property type="nucleotide sequence ID" value="NZ_GG703780.1"/>
</dbReference>
<dbReference type="SMR" id="P66164"/>
<dbReference type="GeneID" id="97533532"/>
<dbReference type="KEGG" id="bme:BMEI0765"/>
<dbReference type="KEGG" id="bmel:DK63_657"/>
<dbReference type="PATRIC" id="fig|224914.52.peg.688"/>
<dbReference type="eggNOG" id="COG0255">
    <property type="taxonomic scope" value="Bacteria"/>
</dbReference>
<dbReference type="Proteomes" id="UP000000419">
    <property type="component" value="Chromosome I"/>
</dbReference>
<dbReference type="GO" id="GO:0022625">
    <property type="term" value="C:cytosolic large ribosomal subunit"/>
    <property type="evidence" value="ECO:0007669"/>
    <property type="project" value="TreeGrafter"/>
</dbReference>
<dbReference type="GO" id="GO:0003735">
    <property type="term" value="F:structural constituent of ribosome"/>
    <property type="evidence" value="ECO:0007669"/>
    <property type="project" value="InterPro"/>
</dbReference>
<dbReference type="GO" id="GO:0006412">
    <property type="term" value="P:translation"/>
    <property type="evidence" value="ECO:0007669"/>
    <property type="project" value="UniProtKB-UniRule"/>
</dbReference>
<dbReference type="CDD" id="cd00427">
    <property type="entry name" value="Ribosomal_L29_HIP"/>
    <property type="match status" value="1"/>
</dbReference>
<dbReference type="FunFam" id="1.10.287.310:FF:000001">
    <property type="entry name" value="50S ribosomal protein L29"/>
    <property type="match status" value="1"/>
</dbReference>
<dbReference type="Gene3D" id="1.10.287.310">
    <property type="match status" value="1"/>
</dbReference>
<dbReference type="HAMAP" id="MF_00374">
    <property type="entry name" value="Ribosomal_uL29"/>
    <property type="match status" value="1"/>
</dbReference>
<dbReference type="InterPro" id="IPR050063">
    <property type="entry name" value="Ribosomal_protein_uL29"/>
</dbReference>
<dbReference type="InterPro" id="IPR001854">
    <property type="entry name" value="Ribosomal_uL29"/>
</dbReference>
<dbReference type="InterPro" id="IPR018254">
    <property type="entry name" value="Ribosomal_uL29_CS"/>
</dbReference>
<dbReference type="InterPro" id="IPR036049">
    <property type="entry name" value="Ribosomal_uL29_sf"/>
</dbReference>
<dbReference type="NCBIfam" id="TIGR00012">
    <property type="entry name" value="L29"/>
    <property type="match status" value="1"/>
</dbReference>
<dbReference type="PANTHER" id="PTHR10916">
    <property type="entry name" value="60S RIBOSOMAL PROTEIN L35/50S RIBOSOMAL PROTEIN L29"/>
    <property type="match status" value="1"/>
</dbReference>
<dbReference type="PANTHER" id="PTHR10916:SF0">
    <property type="entry name" value="LARGE RIBOSOMAL SUBUNIT PROTEIN UL29C"/>
    <property type="match status" value="1"/>
</dbReference>
<dbReference type="Pfam" id="PF00831">
    <property type="entry name" value="Ribosomal_L29"/>
    <property type="match status" value="1"/>
</dbReference>
<dbReference type="SUPFAM" id="SSF46561">
    <property type="entry name" value="Ribosomal protein L29 (L29p)"/>
    <property type="match status" value="1"/>
</dbReference>
<dbReference type="PROSITE" id="PS00579">
    <property type="entry name" value="RIBOSOMAL_L29"/>
    <property type="match status" value="1"/>
</dbReference>
<feature type="chain" id="PRO_0000130361" description="Large ribosomal subunit protein uL29">
    <location>
        <begin position="1"/>
        <end position="66"/>
    </location>
</feature>
<keyword id="KW-0687">Ribonucleoprotein</keyword>
<keyword id="KW-0689">Ribosomal protein</keyword>
<sequence length="66" mass="7512">MKAADVRAKSLDQLNDELGTLKKEQFNLRFQKATGQLEKTARVKQVRRDIARIKTIARQKAAESKA</sequence>
<gene>
    <name evidence="1" type="primary">rpmC</name>
    <name type="ordered locus">BMEI0765</name>
</gene>
<protein>
    <recommendedName>
        <fullName evidence="1">Large ribosomal subunit protein uL29</fullName>
    </recommendedName>
    <alternativeName>
        <fullName evidence="2">50S ribosomal protein L29</fullName>
    </alternativeName>
</protein>
<organism>
    <name type="scientific">Brucella melitensis biotype 1 (strain ATCC 23456 / CCUG 17765 / NCTC 10094 / 16M)</name>
    <dbReference type="NCBI Taxonomy" id="224914"/>
    <lineage>
        <taxon>Bacteria</taxon>
        <taxon>Pseudomonadati</taxon>
        <taxon>Pseudomonadota</taxon>
        <taxon>Alphaproteobacteria</taxon>
        <taxon>Hyphomicrobiales</taxon>
        <taxon>Brucellaceae</taxon>
        <taxon>Brucella/Ochrobactrum group</taxon>
        <taxon>Brucella</taxon>
    </lineage>
</organism>
<evidence type="ECO:0000255" key="1">
    <source>
        <dbReference type="HAMAP-Rule" id="MF_00374"/>
    </source>
</evidence>
<evidence type="ECO:0000305" key="2"/>